<sequence length="287" mass="32407">MKKLPTILLASSLLLAACGNNSHSDDNSNKDKQSQSSKGENKASLQKATKEYEKYTDGQLDKFLDGTEKFVAAIKADDMDKAKELYPKVRMYYERSEPVAEAFGDLDPKIDARLADMKEEKKEDQWTGYHKIEKSLYQDNKIDETTKKDADQLLKDAKELDAKADTLDITPKLMLQGSVDLLNEVSTSKITGEEEIYSHTDLYDFKANIEGAQKIYELFKPELNKKDKKLSADIQKNFDKVNQLLDKYKDGDGFKDYSAVTKEDRKALSDAVNSLGEPLSKMAVVTE</sequence>
<gene>
    <name type="ordered locus">SH0684</name>
</gene>
<feature type="signal peptide" evidence="1">
    <location>
        <begin position="1"/>
        <end position="17"/>
    </location>
</feature>
<feature type="chain" id="PRO_0000278318" description="Efem/EfeO family lipoprotein">
    <location>
        <begin position="18"/>
        <end position="287"/>
    </location>
</feature>
<feature type="region of interest" description="Disordered" evidence="2">
    <location>
        <begin position="20"/>
        <end position="50"/>
    </location>
</feature>
<feature type="compositionally biased region" description="Basic and acidic residues" evidence="2">
    <location>
        <begin position="23"/>
        <end position="33"/>
    </location>
</feature>
<feature type="lipid moiety-binding region" description="N-palmitoyl cysteine" evidence="1">
    <location>
        <position position="18"/>
    </location>
</feature>
<feature type="lipid moiety-binding region" description="S-diacylglycerol cysteine" evidence="1">
    <location>
        <position position="18"/>
    </location>
</feature>
<evidence type="ECO:0000255" key="1">
    <source>
        <dbReference type="PROSITE-ProRule" id="PRU00303"/>
    </source>
</evidence>
<evidence type="ECO:0000256" key="2">
    <source>
        <dbReference type="SAM" id="MobiDB-lite"/>
    </source>
</evidence>
<evidence type="ECO:0000305" key="3"/>
<organism>
    <name type="scientific">Staphylococcus haemolyticus (strain JCSC1435)</name>
    <dbReference type="NCBI Taxonomy" id="279808"/>
    <lineage>
        <taxon>Bacteria</taxon>
        <taxon>Bacillati</taxon>
        <taxon>Bacillota</taxon>
        <taxon>Bacilli</taxon>
        <taxon>Bacillales</taxon>
        <taxon>Staphylococcaceae</taxon>
        <taxon>Staphylococcus</taxon>
    </lineage>
</organism>
<proteinExistence type="inferred from homology"/>
<reference key="1">
    <citation type="journal article" date="2005" name="J. Bacteriol.">
        <title>Whole-genome sequencing of Staphylococcus haemolyticus uncovers the extreme plasticity of its genome and the evolution of human-colonizing staphylococcal species.</title>
        <authorList>
            <person name="Takeuchi F."/>
            <person name="Watanabe S."/>
            <person name="Baba T."/>
            <person name="Yuzawa H."/>
            <person name="Ito T."/>
            <person name="Morimoto Y."/>
            <person name="Kuroda M."/>
            <person name="Cui L."/>
            <person name="Takahashi M."/>
            <person name="Ankai A."/>
            <person name="Baba S."/>
            <person name="Fukui S."/>
            <person name="Lee J.C."/>
            <person name="Hiramatsu K."/>
        </authorList>
    </citation>
    <scope>NUCLEOTIDE SEQUENCE [LARGE SCALE GENOMIC DNA]</scope>
    <source>
        <strain>JCSC1435</strain>
    </source>
</reference>
<protein>
    <recommendedName>
        <fullName>Efem/EfeO family lipoprotein</fullName>
    </recommendedName>
</protein>
<accession>Q4L8N2</accession>
<name>EFEMO_STAHJ</name>
<keyword id="KW-1003">Cell membrane</keyword>
<keyword id="KW-0449">Lipoprotein</keyword>
<keyword id="KW-0472">Membrane</keyword>
<keyword id="KW-0564">Palmitate</keyword>
<keyword id="KW-0732">Signal</keyword>
<dbReference type="EMBL" id="AP006716">
    <property type="protein sequence ID" value="BAE03993.1"/>
    <property type="molecule type" value="Genomic_DNA"/>
</dbReference>
<dbReference type="SMR" id="Q4L8N2"/>
<dbReference type="KEGG" id="sha:SH0684"/>
<dbReference type="eggNOG" id="COG2822">
    <property type="taxonomic scope" value="Bacteria"/>
</dbReference>
<dbReference type="HOGENOM" id="CLU_050342_0_1_9"/>
<dbReference type="OrthoDB" id="7348379at2"/>
<dbReference type="Proteomes" id="UP000000543">
    <property type="component" value="Chromosome"/>
</dbReference>
<dbReference type="GO" id="GO:0005886">
    <property type="term" value="C:plasma membrane"/>
    <property type="evidence" value="ECO:0007669"/>
    <property type="project" value="UniProtKB-SubCell"/>
</dbReference>
<dbReference type="CDD" id="cd14656">
    <property type="entry name" value="Imelysin-like_EfeO"/>
    <property type="match status" value="1"/>
</dbReference>
<dbReference type="Gene3D" id="1.20.1420.20">
    <property type="entry name" value="M75 peptidase, HXXE motif"/>
    <property type="match status" value="1"/>
</dbReference>
<dbReference type="InterPro" id="IPR050894">
    <property type="entry name" value="EfeM/EfeO_iron_uptake"/>
</dbReference>
<dbReference type="InterPro" id="IPR018976">
    <property type="entry name" value="Imelysin-like"/>
</dbReference>
<dbReference type="InterPro" id="IPR034981">
    <property type="entry name" value="Imelysin-like_EfeO/Algp7"/>
</dbReference>
<dbReference type="InterPro" id="IPR038352">
    <property type="entry name" value="Imelysin_sf"/>
</dbReference>
<dbReference type="InterPro" id="IPR053377">
    <property type="entry name" value="Iron_uptake_EfeM/EfeO"/>
</dbReference>
<dbReference type="NCBIfam" id="NF041757">
    <property type="entry name" value="EfeO"/>
    <property type="match status" value="1"/>
</dbReference>
<dbReference type="PANTHER" id="PTHR39192">
    <property type="entry name" value="IRON UPTAKE SYSTEM COMPONENT EFEO"/>
    <property type="match status" value="1"/>
</dbReference>
<dbReference type="PANTHER" id="PTHR39192:SF1">
    <property type="entry name" value="IRON UPTAKE SYSTEM COMPONENT EFEO"/>
    <property type="match status" value="1"/>
</dbReference>
<dbReference type="Pfam" id="PF09375">
    <property type="entry name" value="Peptidase_M75"/>
    <property type="match status" value="1"/>
</dbReference>
<dbReference type="PROSITE" id="PS51257">
    <property type="entry name" value="PROKAR_LIPOPROTEIN"/>
    <property type="match status" value="1"/>
</dbReference>
<comment type="subcellular location">
    <subcellularLocation>
        <location evidence="1">Cell membrane</location>
        <topology evidence="1">Lipid-anchor</topology>
    </subcellularLocation>
</comment>
<comment type="similarity">
    <text evidence="3">Belongs to the EfeM/EfeO family.</text>
</comment>